<protein>
    <recommendedName>
        <fullName evidence="1">UPF0235 protein YggU</fullName>
    </recommendedName>
</protein>
<proteinExistence type="inferred from homology"/>
<name>YGGU_SALTY</name>
<keyword id="KW-1185">Reference proteome</keyword>
<reference key="1">
    <citation type="journal article" date="2001" name="Nature">
        <title>Complete genome sequence of Salmonella enterica serovar Typhimurium LT2.</title>
        <authorList>
            <person name="McClelland M."/>
            <person name="Sanderson K.E."/>
            <person name="Spieth J."/>
            <person name="Clifton S.W."/>
            <person name="Latreille P."/>
            <person name="Courtney L."/>
            <person name="Porwollik S."/>
            <person name="Ali J."/>
            <person name="Dante M."/>
            <person name="Du F."/>
            <person name="Hou S."/>
            <person name="Layman D."/>
            <person name="Leonard S."/>
            <person name="Nguyen C."/>
            <person name="Scott K."/>
            <person name="Holmes A."/>
            <person name="Grewal N."/>
            <person name="Mulvaney E."/>
            <person name="Ryan E."/>
            <person name="Sun H."/>
            <person name="Florea L."/>
            <person name="Miller W."/>
            <person name="Stoneking T."/>
            <person name="Nhan M."/>
            <person name="Waterston R."/>
            <person name="Wilson R.K."/>
        </authorList>
    </citation>
    <scope>NUCLEOTIDE SEQUENCE [LARGE SCALE GENOMIC DNA]</scope>
    <source>
        <strain>LT2 / SGSC1412 / ATCC 700720</strain>
    </source>
</reference>
<sequence>MSAVTRCEDGLVLRLYIQPKASRDSIVGLHGDEVKIAITAPPVDGQANSHLTKFLGKQFRVAKSQIVIEKGELGRHKQVKIIHPQQIPPEIAALTE</sequence>
<gene>
    <name evidence="1" type="primary">yggU</name>
    <name type="ordered locus">STM3102</name>
</gene>
<organism>
    <name type="scientific">Salmonella typhimurium (strain LT2 / SGSC1412 / ATCC 700720)</name>
    <dbReference type="NCBI Taxonomy" id="99287"/>
    <lineage>
        <taxon>Bacteria</taxon>
        <taxon>Pseudomonadati</taxon>
        <taxon>Pseudomonadota</taxon>
        <taxon>Gammaproteobacteria</taxon>
        <taxon>Enterobacterales</taxon>
        <taxon>Enterobacteriaceae</taxon>
        <taxon>Salmonella</taxon>
    </lineage>
</organism>
<accession>Q8ZM46</accession>
<dbReference type="EMBL" id="AE006468">
    <property type="protein sequence ID" value="AAL21977.1"/>
    <property type="molecule type" value="Genomic_DNA"/>
</dbReference>
<dbReference type="RefSeq" id="NP_462018.1">
    <property type="nucleotide sequence ID" value="NC_003197.2"/>
</dbReference>
<dbReference type="RefSeq" id="WP_001277201.1">
    <property type="nucleotide sequence ID" value="NC_003197.2"/>
</dbReference>
<dbReference type="SMR" id="Q8ZM46"/>
<dbReference type="STRING" id="99287.STM3102"/>
<dbReference type="PaxDb" id="99287-STM3102"/>
<dbReference type="GeneID" id="1254625"/>
<dbReference type="KEGG" id="stm:STM3102"/>
<dbReference type="PATRIC" id="fig|99287.12.peg.3287"/>
<dbReference type="HOGENOM" id="CLU_130694_5_0_6"/>
<dbReference type="OMA" id="AANKQCV"/>
<dbReference type="PhylomeDB" id="Q8ZM46"/>
<dbReference type="BioCyc" id="SENT99287:STM3102-MONOMER"/>
<dbReference type="Proteomes" id="UP000001014">
    <property type="component" value="Chromosome"/>
</dbReference>
<dbReference type="GO" id="GO:0005737">
    <property type="term" value="C:cytoplasm"/>
    <property type="evidence" value="ECO:0000318"/>
    <property type="project" value="GO_Central"/>
</dbReference>
<dbReference type="Gene3D" id="3.30.1200.10">
    <property type="entry name" value="YggU-like"/>
    <property type="match status" value="1"/>
</dbReference>
<dbReference type="HAMAP" id="MF_00634">
    <property type="entry name" value="UPF0235"/>
    <property type="match status" value="1"/>
</dbReference>
<dbReference type="InterPro" id="IPR003746">
    <property type="entry name" value="DUF167"/>
</dbReference>
<dbReference type="InterPro" id="IPR036591">
    <property type="entry name" value="YggU-like_sf"/>
</dbReference>
<dbReference type="NCBIfam" id="TIGR00251">
    <property type="entry name" value="DUF167 family protein"/>
    <property type="match status" value="1"/>
</dbReference>
<dbReference type="NCBIfam" id="NF003466">
    <property type="entry name" value="PRK05090.1"/>
    <property type="match status" value="1"/>
</dbReference>
<dbReference type="PANTHER" id="PTHR13420">
    <property type="entry name" value="UPF0235 PROTEIN C15ORF40"/>
    <property type="match status" value="1"/>
</dbReference>
<dbReference type="PANTHER" id="PTHR13420:SF7">
    <property type="entry name" value="UPF0235 PROTEIN C15ORF40"/>
    <property type="match status" value="1"/>
</dbReference>
<dbReference type="Pfam" id="PF02594">
    <property type="entry name" value="DUF167"/>
    <property type="match status" value="1"/>
</dbReference>
<dbReference type="SMART" id="SM01152">
    <property type="entry name" value="DUF167"/>
    <property type="match status" value="1"/>
</dbReference>
<dbReference type="SUPFAM" id="SSF69786">
    <property type="entry name" value="YggU-like"/>
    <property type="match status" value="1"/>
</dbReference>
<evidence type="ECO:0000255" key="1">
    <source>
        <dbReference type="HAMAP-Rule" id="MF_00634"/>
    </source>
</evidence>
<comment type="similarity">
    <text evidence="1">Belongs to the UPF0235 family.</text>
</comment>
<feature type="chain" id="PRO_0000139455" description="UPF0235 protein YggU">
    <location>
        <begin position="1"/>
        <end position="96"/>
    </location>
</feature>